<dbReference type="EC" id="2.1.1.173" evidence="1"/>
<dbReference type="EC" id="2.1.1.264" evidence="1"/>
<dbReference type="EMBL" id="CR522870">
    <property type="protein sequence ID" value="CAG35468.1"/>
    <property type="molecule type" value="Genomic_DNA"/>
</dbReference>
<dbReference type="RefSeq" id="WP_011187984.1">
    <property type="nucleotide sequence ID" value="NC_006138.1"/>
</dbReference>
<dbReference type="SMR" id="Q6AQA5"/>
<dbReference type="STRING" id="177439.DP0739"/>
<dbReference type="KEGG" id="dps:DP0739"/>
<dbReference type="eggNOG" id="COG0116">
    <property type="taxonomic scope" value="Bacteria"/>
</dbReference>
<dbReference type="eggNOG" id="COG1092">
    <property type="taxonomic scope" value="Bacteria"/>
</dbReference>
<dbReference type="HOGENOM" id="CLU_014042_2_0_7"/>
<dbReference type="OrthoDB" id="9784632at2"/>
<dbReference type="Proteomes" id="UP000000602">
    <property type="component" value="Chromosome"/>
</dbReference>
<dbReference type="GO" id="GO:0005737">
    <property type="term" value="C:cytoplasm"/>
    <property type="evidence" value="ECO:0007669"/>
    <property type="project" value="UniProtKB-SubCell"/>
</dbReference>
<dbReference type="GO" id="GO:0052915">
    <property type="term" value="F:23S rRNA (guanine(2445)-N(2))-methyltransferase activity"/>
    <property type="evidence" value="ECO:0007669"/>
    <property type="project" value="UniProtKB-UniRule"/>
</dbReference>
<dbReference type="GO" id="GO:0003723">
    <property type="term" value="F:RNA binding"/>
    <property type="evidence" value="ECO:0007669"/>
    <property type="project" value="UniProtKB-KW"/>
</dbReference>
<dbReference type="GO" id="GO:0070043">
    <property type="term" value="F:rRNA (guanine-N7-)-methyltransferase activity"/>
    <property type="evidence" value="ECO:0007669"/>
    <property type="project" value="UniProtKB-UniRule"/>
</dbReference>
<dbReference type="CDD" id="cd02440">
    <property type="entry name" value="AdoMet_MTases"/>
    <property type="match status" value="1"/>
</dbReference>
<dbReference type="CDD" id="cd11715">
    <property type="entry name" value="THUMP_AdoMetMT"/>
    <property type="match status" value="1"/>
</dbReference>
<dbReference type="Gene3D" id="3.30.2130.30">
    <property type="match status" value="1"/>
</dbReference>
<dbReference type="Gene3D" id="3.30.750.80">
    <property type="entry name" value="RNA methyltransferase domain (HRMD) like"/>
    <property type="match status" value="1"/>
</dbReference>
<dbReference type="Gene3D" id="3.40.50.150">
    <property type="entry name" value="Vaccinia Virus protein VP39"/>
    <property type="match status" value="2"/>
</dbReference>
<dbReference type="HAMAP" id="MF_01858">
    <property type="entry name" value="23SrRNA_methyltr_KL"/>
    <property type="match status" value="1"/>
</dbReference>
<dbReference type="InterPro" id="IPR017244">
    <property type="entry name" value="23SrRNA_methyltr_KL"/>
</dbReference>
<dbReference type="InterPro" id="IPR000241">
    <property type="entry name" value="RlmKL-like_Mtase"/>
</dbReference>
<dbReference type="InterPro" id="IPR053943">
    <property type="entry name" value="RlmKL-like_Mtase_CS"/>
</dbReference>
<dbReference type="InterPro" id="IPR054170">
    <property type="entry name" value="RlmL_1st"/>
</dbReference>
<dbReference type="InterPro" id="IPR019614">
    <property type="entry name" value="SAM-dep_methyl-trfase"/>
</dbReference>
<dbReference type="InterPro" id="IPR029063">
    <property type="entry name" value="SAM-dependent_MTases_sf"/>
</dbReference>
<dbReference type="InterPro" id="IPR004114">
    <property type="entry name" value="THUMP_dom"/>
</dbReference>
<dbReference type="NCBIfam" id="NF008748">
    <property type="entry name" value="PRK11783.1"/>
    <property type="match status" value="1"/>
</dbReference>
<dbReference type="PANTHER" id="PTHR47313">
    <property type="entry name" value="RIBOSOMAL RNA LARGE SUBUNIT METHYLTRANSFERASE K/L"/>
    <property type="match status" value="1"/>
</dbReference>
<dbReference type="PANTHER" id="PTHR47313:SF1">
    <property type="entry name" value="RIBOSOMAL RNA LARGE SUBUNIT METHYLTRANSFERASE K_L"/>
    <property type="match status" value="1"/>
</dbReference>
<dbReference type="Pfam" id="PF10672">
    <property type="entry name" value="Methyltrans_SAM"/>
    <property type="match status" value="1"/>
</dbReference>
<dbReference type="Pfam" id="PF22020">
    <property type="entry name" value="RlmL_1st"/>
    <property type="match status" value="1"/>
</dbReference>
<dbReference type="Pfam" id="PF02926">
    <property type="entry name" value="THUMP"/>
    <property type="match status" value="1"/>
</dbReference>
<dbReference type="Pfam" id="PF01170">
    <property type="entry name" value="UPF0020"/>
    <property type="match status" value="1"/>
</dbReference>
<dbReference type="PIRSF" id="PIRSF037618">
    <property type="entry name" value="RNA_Mtase_bacteria_prd"/>
    <property type="match status" value="1"/>
</dbReference>
<dbReference type="SMART" id="SM00981">
    <property type="entry name" value="THUMP"/>
    <property type="match status" value="1"/>
</dbReference>
<dbReference type="SUPFAM" id="SSF53335">
    <property type="entry name" value="S-adenosyl-L-methionine-dependent methyltransferases"/>
    <property type="match status" value="2"/>
</dbReference>
<dbReference type="PROSITE" id="PS51165">
    <property type="entry name" value="THUMP"/>
    <property type="match status" value="1"/>
</dbReference>
<dbReference type="PROSITE" id="PS01261">
    <property type="entry name" value="UPF0020"/>
    <property type="match status" value="1"/>
</dbReference>
<proteinExistence type="inferred from homology"/>
<keyword id="KW-0963">Cytoplasm</keyword>
<keyword id="KW-0489">Methyltransferase</keyword>
<keyword id="KW-1185">Reference proteome</keyword>
<keyword id="KW-0694">RNA-binding</keyword>
<keyword id="KW-0698">rRNA processing</keyword>
<keyword id="KW-0949">S-adenosyl-L-methionine</keyword>
<keyword id="KW-0808">Transferase</keyword>
<accession>Q6AQA5</accession>
<comment type="function">
    <text evidence="1">Specifically methylates the guanine in position 2445 (m2G2445) and the guanine in position 2069 (m7G2069) of 23S rRNA.</text>
</comment>
<comment type="catalytic activity">
    <reaction evidence="1">
        <text>guanosine(2445) in 23S rRNA + S-adenosyl-L-methionine = N(2)-methylguanosine(2445) in 23S rRNA + S-adenosyl-L-homocysteine + H(+)</text>
        <dbReference type="Rhea" id="RHEA:42740"/>
        <dbReference type="Rhea" id="RHEA-COMP:10215"/>
        <dbReference type="Rhea" id="RHEA-COMP:10216"/>
        <dbReference type="ChEBI" id="CHEBI:15378"/>
        <dbReference type="ChEBI" id="CHEBI:57856"/>
        <dbReference type="ChEBI" id="CHEBI:59789"/>
        <dbReference type="ChEBI" id="CHEBI:74269"/>
        <dbReference type="ChEBI" id="CHEBI:74481"/>
        <dbReference type="EC" id="2.1.1.173"/>
    </reaction>
</comment>
<comment type="catalytic activity">
    <reaction evidence="1">
        <text>guanosine(2069) in 23S rRNA + S-adenosyl-L-methionine = N(2)-methylguanosine(2069) in 23S rRNA + S-adenosyl-L-homocysteine + H(+)</text>
        <dbReference type="Rhea" id="RHEA:43772"/>
        <dbReference type="Rhea" id="RHEA-COMP:10688"/>
        <dbReference type="Rhea" id="RHEA-COMP:10689"/>
        <dbReference type="ChEBI" id="CHEBI:15378"/>
        <dbReference type="ChEBI" id="CHEBI:57856"/>
        <dbReference type="ChEBI" id="CHEBI:59789"/>
        <dbReference type="ChEBI" id="CHEBI:74269"/>
        <dbReference type="ChEBI" id="CHEBI:74481"/>
        <dbReference type="EC" id="2.1.1.264"/>
    </reaction>
</comment>
<comment type="subcellular location">
    <subcellularLocation>
        <location evidence="1">Cytoplasm</location>
    </subcellularLocation>
</comment>
<comment type="similarity">
    <text evidence="1">Belongs to the methyltransferase superfamily. RlmKL family.</text>
</comment>
<protein>
    <recommendedName>
        <fullName evidence="1">Ribosomal RNA large subunit methyltransferase K/L</fullName>
    </recommendedName>
    <domain>
        <recommendedName>
            <fullName evidence="1">23S rRNA m2G2445 methyltransferase</fullName>
            <ecNumber evidence="1">2.1.1.173</ecNumber>
        </recommendedName>
        <alternativeName>
            <fullName evidence="1">rRNA (guanine-N(2)-)-methyltransferase RlmL</fullName>
        </alternativeName>
    </domain>
    <domain>
        <recommendedName>
            <fullName evidence="1">23S rRNA m7G2069 methyltransferase</fullName>
            <ecNumber evidence="1">2.1.1.264</ecNumber>
        </recommendedName>
        <alternativeName>
            <fullName evidence="1">rRNA (guanine-N(7)-)-methyltransferase RlmK</fullName>
        </alternativeName>
    </domain>
</protein>
<feature type="chain" id="PRO_0000366733" description="Ribosomal RNA large subunit methyltransferase K/L">
    <location>
        <begin position="1"/>
        <end position="722"/>
    </location>
</feature>
<feature type="domain" description="THUMP" evidence="1">
    <location>
        <begin position="55"/>
        <end position="167"/>
    </location>
</feature>
<reference key="1">
    <citation type="journal article" date="2004" name="Environ. Microbiol.">
        <title>The genome of Desulfotalea psychrophila, a sulfate-reducing bacterium from permanently cold Arctic sediments.</title>
        <authorList>
            <person name="Rabus R."/>
            <person name="Ruepp A."/>
            <person name="Frickey T."/>
            <person name="Rattei T."/>
            <person name="Fartmann B."/>
            <person name="Stark M."/>
            <person name="Bauer M."/>
            <person name="Zibat A."/>
            <person name="Lombardot T."/>
            <person name="Becker I."/>
            <person name="Amann J."/>
            <person name="Gellner K."/>
            <person name="Teeling H."/>
            <person name="Leuschner W.D."/>
            <person name="Gloeckner F.-O."/>
            <person name="Lupas A.N."/>
            <person name="Amann R."/>
            <person name="Klenk H.-P."/>
        </authorList>
    </citation>
    <scope>NUCLEOTIDE SEQUENCE [LARGE SCALE GENOMIC DNA]</scope>
    <source>
        <strain>DSM 12343 / LSv54</strain>
    </source>
</reference>
<sequence length="722" mass="82683">MCDKKDVSPQKDQYTFLANCALGLEELIEAEIKGFSGVEVELGKGTVQWQGSLETGYRACLWSRFSSRILLKLSQFEVNSEDDLYQNSFTYDWHQHMSWKTTFAIDCTLSADATVGHSQFAALRIKDGIVDRFKEDGDERPSVKTTQPDVRFHIHVSGNEGTLYLDLSGESLHKRGYRVAGGMAPLKENLAAGIVALSGWPEKQEALPSLIDPMCGTGTLLIEAAMMFGDVAPGLARNYFGFLHWHQHDSQLWQALLDEAVAREDAGLDKTWPSFQGYDADPVVVSSARKNIIRAGLDEFIQVKCSPLVHLGAPTDRGMLICNPPYGERLSETEKVRQLYAAFGRIGRKHFAGWDVAVFISNPDLAESFRVSWEKKYRLFNGTIACRLSTGVFAEEEENSFAWEIQQVEVQEDALQFANRFKKNLKKYLKWAKKENISCFRVYDRDLQEFNLSVDLYEKWIHVQEYLPPKTIDPDLASRRFNIALRAIREILGLRSDRVFIKKRQRQKGAGQYQQQGDRKKMHQVREGNCYFLVNFRDYLDTGLFLDHRPIRLRIGRESLGKKFLNLYGYTGTASVHAAQGGAASTTTVDLSSTYLQWTEMNFSLNGFAENNHRTVKADCIKWLAEETELYDTIFVDPPTFSNTQKANRVFDIQRDHIQLLTLAMRRLSPGGLLIFSTNFRRFILDEKLAEQFDVKDITRESIPLDFSRNEKIHFCWEFRQK</sequence>
<name>RLMKL_DESPS</name>
<organism>
    <name type="scientific">Desulfotalea psychrophila (strain LSv54 / DSM 12343)</name>
    <dbReference type="NCBI Taxonomy" id="177439"/>
    <lineage>
        <taxon>Bacteria</taxon>
        <taxon>Pseudomonadati</taxon>
        <taxon>Thermodesulfobacteriota</taxon>
        <taxon>Desulfobulbia</taxon>
        <taxon>Desulfobulbales</taxon>
        <taxon>Desulfocapsaceae</taxon>
        <taxon>Desulfotalea</taxon>
    </lineage>
</organism>
<evidence type="ECO:0000255" key="1">
    <source>
        <dbReference type="HAMAP-Rule" id="MF_01858"/>
    </source>
</evidence>
<gene>
    <name evidence="1" type="primary">rlmL</name>
    <name type="ordered locus">DP0739</name>
</gene>